<reference key="1">
    <citation type="journal article" date="1999" name="Proc. R. Soc. B">
        <title>The mitochondrial DNA molecule of the aardvark, Orycteropus afer, and the position of the Tubulidentata in the eutherian tree.</title>
        <authorList>
            <person name="Arnason U."/>
            <person name="Gullberg A."/>
            <person name="Janke A."/>
        </authorList>
    </citation>
    <scope>NUCLEOTIDE SEQUENCE [GENOMIC DNA]</scope>
</reference>
<evidence type="ECO:0000250" key="1">
    <source>
        <dbReference type="UniProtKB" id="P03901"/>
    </source>
</evidence>
<evidence type="ECO:0000250" key="2">
    <source>
        <dbReference type="UniProtKB" id="P03902"/>
    </source>
</evidence>
<evidence type="ECO:0000255" key="3"/>
<evidence type="ECO:0000305" key="4"/>
<keyword id="KW-0249">Electron transport</keyword>
<keyword id="KW-0472">Membrane</keyword>
<keyword id="KW-0496">Mitochondrion</keyword>
<keyword id="KW-0999">Mitochondrion inner membrane</keyword>
<keyword id="KW-0520">NAD</keyword>
<keyword id="KW-0679">Respiratory chain</keyword>
<keyword id="KW-1278">Translocase</keyword>
<keyword id="KW-0812">Transmembrane</keyword>
<keyword id="KW-1133">Transmembrane helix</keyword>
<keyword id="KW-0813">Transport</keyword>
<keyword id="KW-0830">Ubiquinone</keyword>
<organism>
    <name type="scientific">Orycteropus afer</name>
    <name type="common">Aardvark</name>
    <dbReference type="NCBI Taxonomy" id="9818"/>
    <lineage>
        <taxon>Eukaryota</taxon>
        <taxon>Metazoa</taxon>
        <taxon>Chordata</taxon>
        <taxon>Craniata</taxon>
        <taxon>Vertebrata</taxon>
        <taxon>Euteleostomi</taxon>
        <taxon>Mammalia</taxon>
        <taxon>Eutheria</taxon>
        <taxon>Afrotheria</taxon>
        <taxon>Tubulidentata</taxon>
        <taxon>Orycteropodidae</taxon>
        <taxon>Orycteropus</taxon>
    </lineage>
</organism>
<geneLocation type="mitochondrion"/>
<comment type="function">
    <text evidence="1">Core subunit of the mitochondrial membrane respiratory chain NADH dehydrogenase (Complex I) which catalyzes electron transfer from NADH through the respiratory chain, using ubiquinone as an electron acceptor. Part of the enzyme membrane arm which is embedded in the lipid bilayer and involved in proton translocation.</text>
</comment>
<comment type="catalytic activity">
    <reaction evidence="1">
        <text>a ubiquinone + NADH + 5 H(+)(in) = a ubiquinol + NAD(+) + 4 H(+)(out)</text>
        <dbReference type="Rhea" id="RHEA:29091"/>
        <dbReference type="Rhea" id="RHEA-COMP:9565"/>
        <dbReference type="Rhea" id="RHEA-COMP:9566"/>
        <dbReference type="ChEBI" id="CHEBI:15378"/>
        <dbReference type="ChEBI" id="CHEBI:16389"/>
        <dbReference type="ChEBI" id="CHEBI:17976"/>
        <dbReference type="ChEBI" id="CHEBI:57540"/>
        <dbReference type="ChEBI" id="CHEBI:57945"/>
        <dbReference type="EC" id="7.1.1.2"/>
    </reaction>
    <physiologicalReaction direction="left-to-right" evidence="1">
        <dbReference type="Rhea" id="RHEA:29092"/>
    </physiologicalReaction>
</comment>
<comment type="subunit">
    <text evidence="2">Core subunit of respiratory chain NADH dehydrogenase (Complex I) which is composed of 45 different subunits.</text>
</comment>
<comment type="subcellular location">
    <subcellularLocation>
        <location evidence="2">Mitochondrion inner membrane</location>
        <topology evidence="3">Multi-pass membrane protein</topology>
    </subcellularLocation>
</comment>
<comment type="similarity">
    <text evidence="4">Belongs to the complex I subunit 4L family.</text>
</comment>
<gene>
    <name type="primary">MT-ND4L</name>
    <name type="synonym">MTND4L</name>
    <name type="synonym">NADH4L</name>
    <name type="synonym">ND4L</name>
</gene>
<dbReference type="EC" id="7.1.1.2"/>
<dbReference type="EMBL" id="Y18475">
    <property type="protein sequence ID" value="CAB41629.1"/>
    <property type="molecule type" value="Genomic_DNA"/>
</dbReference>
<dbReference type="PIR" id="T11345">
    <property type="entry name" value="T11345"/>
</dbReference>
<dbReference type="RefSeq" id="NP_008583.1">
    <property type="nucleotide sequence ID" value="NC_002078.1"/>
</dbReference>
<dbReference type="SMR" id="Q9XMJ3"/>
<dbReference type="GeneID" id="808414"/>
<dbReference type="CTD" id="4539"/>
<dbReference type="GO" id="GO:0005743">
    <property type="term" value="C:mitochondrial inner membrane"/>
    <property type="evidence" value="ECO:0000250"/>
    <property type="project" value="UniProtKB"/>
</dbReference>
<dbReference type="GO" id="GO:0045271">
    <property type="term" value="C:respiratory chain complex I"/>
    <property type="evidence" value="ECO:0000250"/>
    <property type="project" value="UniProtKB"/>
</dbReference>
<dbReference type="GO" id="GO:0008137">
    <property type="term" value="F:NADH dehydrogenase (ubiquinone) activity"/>
    <property type="evidence" value="ECO:0000250"/>
    <property type="project" value="UniProtKB"/>
</dbReference>
<dbReference type="GO" id="GO:0042773">
    <property type="term" value="P:ATP synthesis coupled electron transport"/>
    <property type="evidence" value="ECO:0007669"/>
    <property type="project" value="InterPro"/>
</dbReference>
<dbReference type="FunFam" id="1.10.287.3510:FF:000002">
    <property type="entry name" value="NADH-ubiquinone oxidoreductase chain 4L"/>
    <property type="match status" value="1"/>
</dbReference>
<dbReference type="Gene3D" id="1.10.287.3510">
    <property type="match status" value="1"/>
</dbReference>
<dbReference type="InterPro" id="IPR001133">
    <property type="entry name" value="NADH_UbQ_OxRdtase_chain4L/K"/>
</dbReference>
<dbReference type="InterPro" id="IPR039428">
    <property type="entry name" value="NUOK/Mnh_C1-like"/>
</dbReference>
<dbReference type="PANTHER" id="PTHR11434:SF0">
    <property type="entry name" value="NADH-UBIQUINONE OXIDOREDUCTASE CHAIN 4L"/>
    <property type="match status" value="1"/>
</dbReference>
<dbReference type="PANTHER" id="PTHR11434">
    <property type="entry name" value="NADH-UBIQUINONE OXIDOREDUCTASE SUBUNIT ND4L"/>
    <property type="match status" value="1"/>
</dbReference>
<dbReference type="Pfam" id="PF00420">
    <property type="entry name" value="Oxidored_q2"/>
    <property type="match status" value="1"/>
</dbReference>
<proteinExistence type="inferred from homology"/>
<sequence length="98" mass="10855">MPPIYMNIILAFTLSLMGMLVYRSHLMSSLLCLEGMMLSLFILGTTMALNMHFTLMTMLPIVLLVFAACEAAVGLSLLVMVSNTYGLDYVQNLNLLQC</sequence>
<protein>
    <recommendedName>
        <fullName>NADH-ubiquinone oxidoreductase chain 4L</fullName>
        <ecNumber>7.1.1.2</ecNumber>
    </recommendedName>
    <alternativeName>
        <fullName>NADH dehydrogenase subunit 4L</fullName>
    </alternativeName>
</protein>
<name>NU4LM_ORYAF</name>
<feature type="chain" id="PRO_0000275082" description="NADH-ubiquinone oxidoreductase chain 4L">
    <location>
        <begin position="1"/>
        <end position="98"/>
    </location>
</feature>
<feature type="transmembrane region" description="Helical" evidence="3">
    <location>
        <begin position="1"/>
        <end position="21"/>
    </location>
</feature>
<feature type="transmembrane region" description="Helical" evidence="3">
    <location>
        <begin position="29"/>
        <end position="49"/>
    </location>
</feature>
<feature type="transmembrane region" description="Helical" evidence="3">
    <location>
        <begin position="61"/>
        <end position="81"/>
    </location>
</feature>
<accession>Q9XMJ3</accession>